<proteinExistence type="inferred from homology"/>
<reference key="1">
    <citation type="journal article" date="2010" name="Genome Biol. Evol.">
        <title>Continuing evolution of Burkholderia mallei through genome reduction and large-scale rearrangements.</title>
        <authorList>
            <person name="Losada L."/>
            <person name="Ronning C.M."/>
            <person name="DeShazer D."/>
            <person name="Woods D."/>
            <person name="Fedorova N."/>
            <person name="Kim H.S."/>
            <person name="Shabalina S.A."/>
            <person name="Pearson T.R."/>
            <person name="Brinkac L."/>
            <person name="Tan P."/>
            <person name="Nandi T."/>
            <person name="Crabtree J."/>
            <person name="Badger J."/>
            <person name="Beckstrom-Sternberg S."/>
            <person name="Saqib M."/>
            <person name="Schutzer S.E."/>
            <person name="Keim P."/>
            <person name="Nierman W.C."/>
        </authorList>
    </citation>
    <scope>NUCLEOTIDE SEQUENCE [LARGE SCALE GENOMIC DNA]</scope>
    <source>
        <strain>NCTC 10247</strain>
    </source>
</reference>
<keyword id="KW-0342">GTP-binding</keyword>
<keyword id="KW-0547">Nucleotide-binding</keyword>
<keyword id="KW-0677">Repeat</keyword>
<keyword id="KW-0690">Ribosome biogenesis</keyword>
<gene>
    <name evidence="1" type="primary">der</name>
    <name type="synonym">engA</name>
    <name type="ordered locus">BMA10247_1102</name>
</gene>
<organism>
    <name type="scientific">Burkholderia mallei (strain NCTC 10247)</name>
    <dbReference type="NCBI Taxonomy" id="320389"/>
    <lineage>
        <taxon>Bacteria</taxon>
        <taxon>Pseudomonadati</taxon>
        <taxon>Pseudomonadota</taxon>
        <taxon>Betaproteobacteria</taxon>
        <taxon>Burkholderiales</taxon>
        <taxon>Burkholderiaceae</taxon>
        <taxon>Burkholderia</taxon>
        <taxon>pseudomallei group</taxon>
    </lineage>
</organism>
<evidence type="ECO:0000255" key="1">
    <source>
        <dbReference type="HAMAP-Rule" id="MF_00195"/>
    </source>
</evidence>
<name>DER_BURM7</name>
<comment type="function">
    <text evidence="1">GTPase that plays an essential role in the late steps of ribosome biogenesis.</text>
</comment>
<comment type="subunit">
    <text evidence="1">Associates with the 50S ribosomal subunit.</text>
</comment>
<comment type="similarity">
    <text evidence="1">Belongs to the TRAFAC class TrmE-Era-EngA-EngB-Septin-like GTPase superfamily. EngA (Der) GTPase family.</text>
</comment>
<feature type="chain" id="PRO_1000011581" description="GTPase Der">
    <location>
        <begin position="1"/>
        <end position="445"/>
    </location>
</feature>
<feature type="domain" description="EngA-type G 1">
    <location>
        <begin position="3"/>
        <end position="167"/>
    </location>
</feature>
<feature type="domain" description="EngA-type G 2">
    <location>
        <begin position="180"/>
        <end position="353"/>
    </location>
</feature>
<feature type="domain" description="KH-like" evidence="1">
    <location>
        <begin position="354"/>
        <end position="438"/>
    </location>
</feature>
<feature type="binding site" evidence="1">
    <location>
        <begin position="9"/>
        <end position="16"/>
    </location>
    <ligand>
        <name>GTP</name>
        <dbReference type="ChEBI" id="CHEBI:37565"/>
        <label>1</label>
    </ligand>
</feature>
<feature type="binding site" evidence="1">
    <location>
        <begin position="56"/>
        <end position="60"/>
    </location>
    <ligand>
        <name>GTP</name>
        <dbReference type="ChEBI" id="CHEBI:37565"/>
        <label>1</label>
    </ligand>
</feature>
<feature type="binding site" evidence="1">
    <location>
        <begin position="119"/>
        <end position="122"/>
    </location>
    <ligand>
        <name>GTP</name>
        <dbReference type="ChEBI" id="CHEBI:37565"/>
        <label>1</label>
    </ligand>
</feature>
<feature type="binding site" evidence="1">
    <location>
        <begin position="186"/>
        <end position="193"/>
    </location>
    <ligand>
        <name>GTP</name>
        <dbReference type="ChEBI" id="CHEBI:37565"/>
        <label>2</label>
    </ligand>
</feature>
<feature type="binding site" evidence="1">
    <location>
        <begin position="233"/>
        <end position="237"/>
    </location>
    <ligand>
        <name>GTP</name>
        <dbReference type="ChEBI" id="CHEBI:37565"/>
        <label>2</label>
    </ligand>
</feature>
<feature type="binding site" evidence="1">
    <location>
        <begin position="298"/>
        <end position="301"/>
    </location>
    <ligand>
        <name>GTP</name>
        <dbReference type="ChEBI" id="CHEBI:37565"/>
        <label>2</label>
    </ligand>
</feature>
<protein>
    <recommendedName>
        <fullName evidence="1">GTPase Der</fullName>
    </recommendedName>
    <alternativeName>
        <fullName evidence="1">GTP-binding protein EngA</fullName>
    </alternativeName>
</protein>
<dbReference type="EMBL" id="CP000548">
    <property type="protein sequence ID" value="ABO05408.1"/>
    <property type="molecule type" value="Genomic_DNA"/>
</dbReference>
<dbReference type="RefSeq" id="WP_004192452.1">
    <property type="nucleotide sequence ID" value="NZ_CP007802.1"/>
</dbReference>
<dbReference type="SMR" id="A3MK70"/>
<dbReference type="GeneID" id="93060472"/>
<dbReference type="KEGG" id="bmaz:BM44_1994"/>
<dbReference type="KEGG" id="bmn:BMA10247_1102"/>
<dbReference type="PATRIC" id="fig|320389.8.peg.2239"/>
<dbReference type="GO" id="GO:0016887">
    <property type="term" value="F:ATP hydrolysis activity"/>
    <property type="evidence" value="ECO:0007669"/>
    <property type="project" value="InterPro"/>
</dbReference>
<dbReference type="GO" id="GO:0005525">
    <property type="term" value="F:GTP binding"/>
    <property type="evidence" value="ECO:0007669"/>
    <property type="project" value="UniProtKB-UniRule"/>
</dbReference>
<dbReference type="GO" id="GO:0043022">
    <property type="term" value="F:ribosome binding"/>
    <property type="evidence" value="ECO:0007669"/>
    <property type="project" value="TreeGrafter"/>
</dbReference>
<dbReference type="GO" id="GO:0042254">
    <property type="term" value="P:ribosome biogenesis"/>
    <property type="evidence" value="ECO:0007669"/>
    <property type="project" value="UniProtKB-KW"/>
</dbReference>
<dbReference type="CDD" id="cd01894">
    <property type="entry name" value="EngA1"/>
    <property type="match status" value="1"/>
</dbReference>
<dbReference type="CDD" id="cd01895">
    <property type="entry name" value="EngA2"/>
    <property type="match status" value="1"/>
</dbReference>
<dbReference type="FunFam" id="3.30.300.20:FF:000004">
    <property type="entry name" value="GTPase Der"/>
    <property type="match status" value="1"/>
</dbReference>
<dbReference type="FunFam" id="3.40.50.300:FF:000040">
    <property type="entry name" value="GTPase Der"/>
    <property type="match status" value="1"/>
</dbReference>
<dbReference type="FunFam" id="3.40.50.300:FF:000057">
    <property type="entry name" value="GTPase Der"/>
    <property type="match status" value="1"/>
</dbReference>
<dbReference type="Gene3D" id="3.30.300.20">
    <property type="match status" value="1"/>
</dbReference>
<dbReference type="Gene3D" id="3.40.50.300">
    <property type="entry name" value="P-loop containing nucleotide triphosphate hydrolases"/>
    <property type="match status" value="2"/>
</dbReference>
<dbReference type="HAMAP" id="MF_00195">
    <property type="entry name" value="GTPase_Der"/>
    <property type="match status" value="1"/>
</dbReference>
<dbReference type="InterPro" id="IPR003593">
    <property type="entry name" value="AAA+_ATPase"/>
</dbReference>
<dbReference type="InterPro" id="IPR031166">
    <property type="entry name" value="G_ENGA"/>
</dbReference>
<dbReference type="InterPro" id="IPR006073">
    <property type="entry name" value="GTP-bd"/>
</dbReference>
<dbReference type="InterPro" id="IPR016484">
    <property type="entry name" value="GTPase_Der"/>
</dbReference>
<dbReference type="InterPro" id="IPR032859">
    <property type="entry name" value="KH_dom-like"/>
</dbReference>
<dbReference type="InterPro" id="IPR015946">
    <property type="entry name" value="KH_dom-like_a/b"/>
</dbReference>
<dbReference type="InterPro" id="IPR027417">
    <property type="entry name" value="P-loop_NTPase"/>
</dbReference>
<dbReference type="InterPro" id="IPR005225">
    <property type="entry name" value="Small_GTP-bd"/>
</dbReference>
<dbReference type="NCBIfam" id="TIGR03594">
    <property type="entry name" value="GTPase_EngA"/>
    <property type="match status" value="1"/>
</dbReference>
<dbReference type="NCBIfam" id="TIGR00231">
    <property type="entry name" value="small_GTP"/>
    <property type="match status" value="2"/>
</dbReference>
<dbReference type="PANTHER" id="PTHR43834">
    <property type="entry name" value="GTPASE DER"/>
    <property type="match status" value="1"/>
</dbReference>
<dbReference type="PANTHER" id="PTHR43834:SF6">
    <property type="entry name" value="GTPASE DER"/>
    <property type="match status" value="1"/>
</dbReference>
<dbReference type="Pfam" id="PF14714">
    <property type="entry name" value="KH_dom-like"/>
    <property type="match status" value="1"/>
</dbReference>
<dbReference type="Pfam" id="PF01926">
    <property type="entry name" value="MMR_HSR1"/>
    <property type="match status" value="2"/>
</dbReference>
<dbReference type="PIRSF" id="PIRSF006485">
    <property type="entry name" value="GTP-binding_EngA"/>
    <property type="match status" value="1"/>
</dbReference>
<dbReference type="PRINTS" id="PR00326">
    <property type="entry name" value="GTP1OBG"/>
</dbReference>
<dbReference type="SMART" id="SM00382">
    <property type="entry name" value="AAA"/>
    <property type="match status" value="2"/>
</dbReference>
<dbReference type="SUPFAM" id="SSF52540">
    <property type="entry name" value="P-loop containing nucleoside triphosphate hydrolases"/>
    <property type="match status" value="2"/>
</dbReference>
<dbReference type="PROSITE" id="PS51712">
    <property type="entry name" value="G_ENGA"/>
    <property type="match status" value="2"/>
</dbReference>
<accession>A3MK70</accession>
<sequence>MKPVIALVGRPNVGKSTLFNRLTRSRDALVADLPGLTRDRHYGEGRVGARPYLVVDTGGFEPVAKDGILHEMARQTRQAVEEADVVVFIVDGRNGLAPQDKSIADYLRKTGRPIFLVVNKAEGMKYTAVASDFYELGLGDPRAISAAHGDGVNDMINEALEVAYAGEPQESEEAAAARGIKIAIVGRPNVGKSTLVNTLIGEDRVIAFDMPGTTRDSIYVDFERNGKHYTLIDTAGLRRRGKVFEAIEKFSVVKTLQSISDANVVILLLDARQDISDQDAHIAGFVVEQGRALVVGVNKWDGLDPHVRERTKADLARKLKFLEFAKFHFISAAEKTGIGALMRSVDDAYAAAMKKLPTPKLTRALIEAVEFQQPRRRGPVRPKLRYAHQGGQNPPIIVIHGNALDAVTETYKRYLENRFRETFSLTGTPLRIEFRSSTNPYADKD</sequence>